<gene>
    <name evidence="1" type="primary">pnp</name>
    <name type="ordered locus">ZMO0549</name>
</gene>
<name>PNP_ZYMMO</name>
<protein>
    <recommendedName>
        <fullName evidence="1">Polyribonucleotide nucleotidyltransferase</fullName>
        <ecNumber evidence="1">2.7.7.8</ecNumber>
    </recommendedName>
    <alternativeName>
        <fullName evidence="1">Polynucleotide phosphorylase</fullName>
        <shortName evidence="1">PNPase</shortName>
    </alternativeName>
</protein>
<keyword id="KW-0963">Cytoplasm</keyword>
<keyword id="KW-0460">Magnesium</keyword>
<keyword id="KW-0479">Metal-binding</keyword>
<keyword id="KW-0548">Nucleotidyltransferase</keyword>
<keyword id="KW-1185">Reference proteome</keyword>
<keyword id="KW-0694">RNA-binding</keyword>
<keyword id="KW-0808">Transferase</keyword>
<comment type="function">
    <text evidence="1">Involved in mRNA degradation. Catalyzes the phosphorolysis of single-stranded polyribonucleotides processively in the 3'- to 5'-direction.</text>
</comment>
<comment type="catalytic activity">
    <reaction evidence="1">
        <text>RNA(n+1) + phosphate = RNA(n) + a ribonucleoside 5'-diphosphate</text>
        <dbReference type="Rhea" id="RHEA:22096"/>
        <dbReference type="Rhea" id="RHEA-COMP:14527"/>
        <dbReference type="Rhea" id="RHEA-COMP:17342"/>
        <dbReference type="ChEBI" id="CHEBI:43474"/>
        <dbReference type="ChEBI" id="CHEBI:57930"/>
        <dbReference type="ChEBI" id="CHEBI:140395"/>
        <dbReference type="EC" id="2.7.7.8"/>
    </reaction>
</comment>
<comment type="cofactor">
    <cofactor evidence="1">
        <name>Mg(2+)</name>
        <dbReference type="ChEBI" id="CHEBI:18420"/>
    </cofactor>
</comment>
<comment type="subcellular location">
    <subcellularLocation>
        <location evidence="1">Cytoplasm</location>
    </subcellularLocation>
</comment>
<comment type="similarity">
    <text evidence="1">Belongs to the polyribonucleotide nucleotidyltransferase family.</text>
</comment>
<accession>Q5NQ32</accession>
<organism>
    <name type="scientific">Zymomonas mobilis subsp. mobilis (strain ATCC 31821 / ZM4 / CP4)</name>
    <dbReference type="NCBI Taxonomy" id="264203"/>
    <lineage>
        <taxon>Bacteria</taxon>
        <taxon>Pseudomonadati</taxon>
        <taxon>Pseudomonadota</taxon>
        <taxon>Alphaproteobacteria</taxon>
        <taxon>Sphingomonadales</taxon>
        <taxon>Zymomonadaceae</taxon>
        <taxon>Zymomonas</taxon>
    </lineage>
</organism>
<sequence>MFDIKRQEIDWGGKKLTLETGQVARQADGAVIATLGETVVLCAVTAAKTVKEGQDFFPLTVHYQEKYSAAGRIPGGFFKRERGATERETLISRLIDRPIRPLFPEGFYNETLVIAQVMSYDGENEPDILAMIAASAALALSGVPFLGPIGAARVGYQDGEFILNPTLEQLEKSDLDLVVGATRDAVMMVESEANELPEEVMLNAVSFAHESLQPVIKAIINLAEQAAKEPWELVSYDDSALAAKVEELCYDNFDKAYRLTRKAERVDALSKAKAVLDEAFPEADPTEKLRIQKLAKKLEAKIVRTAILKEGRRIDGRDLKTVRPIRSQVGFLPRTHGSALFTRGETQALVSTTLGTADAEQMIDGLTGLHYERFMLHYNFPPYSVGEVGRFGAPGRREIGHGKLAWRALHPVLPSKADFPYTIRVLSDITESNGSSSMATVCGGCLALMDAGVPLTRPVSGIAMGLILEKDGFAILSDIMGDEDHLGDMDFKVAGTEKGITSLQMDIKVAGITEEIMQKALEQAKGGRAHILGEMSKALGEVRSEISNLAPRIETMSVPKDKIRDVIGTGGKVIREIVATTGAKVDIEDDGTVRLSSSDPANIEAAREWINGIVEEPEVGKIYNGKVVNIVDFGAFVNFMGGRDGLVHVSEIKNERVNKVSDVLSEGQEVKVKVLEIDNRGKVRLSMRVVDQETGAELDDNRPPRENAERRGGERPRRDRGPRRESGDRPARRDMEPEFAPAFLRKDS</sequence>
<dbReference type="EC" id="2.7.7.8" evidence="1"/>
<dbReference type="EMBL" id="AE008692">
    <property type="protein sequence ID" value="AAV89173.1"/>
    <property type="molecule type" value="Genomic_DNA"/>
</dbReference>
<dbReference type="RefSeq" id="WP_011240455.1">
    <property type="nucleotide sequence ID" value="NZ_CP035711.1"/>
</dbReference>
<dbReference type="SMR" id="Q5NQ32"/>
<dbReference type="STRING" id="264203.ZMO0549"/>
<dbReference type="KEGG" id="zmo:ZMO0549"/>
<dbReference type="eggNOG" id="COG1185">
    <property type="taxonomic scope" value="Bacteria"/>
</dbReference>
<dbReference type="HOGENOM" id="CLU_004217_2_2_5"/>
<dbReference type="Proteomes" id="UP000001173">
    <property type="component" value="Chromosome"/>
</dbReference>
<dbReference type="GO" id="GO:0005829">
    <property type="term" value="C:cytosol"/>
    <property type="evidence" value="ECO:0007669"/>
    <property type="project" value="TreeGrafter"/>
</dbReference>
<dbReference type="GO" id="GO:0000175">
    <property type="term" value="F:3'-5'-RNA exonuclease activity"/>
    <property type="evidence" value="ECO:0007669"/>
    <property type="project" value="TreeGrafter"/>
</dbReference>
<dbReference type="GO" id="GO:0000287">
    <property type="term" value="F:magnesium ion binding"/>
    <property type="evidence" value="ECO:0007669"/>
    <property type="project" value="UniProtKB-UniRule"/>
</dbReference>
<dbReference type="GO" id="GO:0004654">
    <property type="term" value="F:polyribonucleotide nucleotidyltransferase activity"/>
    <property type="evidence" value="ECO:0007669"/>
    <property type="project" value="UniProtKB-UniRule"/>
</dbReference>
<dbReference type="GO" id="GO:0003723">
    <property type="term" value="F:RNA binding"/>
    <property type="evidence" value="ECO:0007669"/>
    <property type="project" value="UniProtKB-UniRule"/>
</dbReference>
<dbReference type="GO" id="GO:0006402">
    <property type="term" value="P:mRNA catabolic process"/>
    <property type="evidence" value="ECO:0007669"/>
    <property type="project" value="UniProtKB-UniRule"/>
</dbReference>
<dbReference type="GO" id="GO:0006396">
    <property type="term" value="P:RNA processing"/>
    <property type="evidence" value="ECO:0007669"/>
    <property type="project" value="InterPro"/>
</dbReference>
<dbReference type="CDD" id="cd02393">
    <property type="entry name" value="KH-I_PNPase"/>
    <property type="match status" value="1"/>
</dbReference>
<dbReference type="CDD" id="cd11363">
    <property type="entry name" value="RNase_PH_PNPase_1"/>
    <property type="match status" value="1"/>
</dbReference>
<dbReference type="CDD" id="cd11364">
    <property type="entry name" value="RNase_PH_PNPase_2"/>
    <property type="match status" value="1"/>
</dbReference>
<dbReference type="CDD" id="cd04472">
    <property type="entry name" value="S1_PNPase"/>
    <property type="match status" value="1"/>
</dbReference>
<dbReference type="FunFam" id="2.40.50.140:FF:000107">
    <property type="entry name" value="Polyribonucleotide nucleotidyltransferase"/>
    <property type="match status" value="1"/>
</dbReference>
<dbReference type="FunFam" id="3.30.1370.10:FF:000001">
    <property type="entry name" value="Polyribonucleotide nucleotidyltransferase"/>
    <property type="match status" value="1"/>
</dbReference>
<dbReference type="FunFam" id="3.30.230.70:FF:000001">
    <property type="entry name" value="Polyribonucleotide nucleotidyltransferase"/>
    <property type="match status" value="1"/>
</dbReference>
<dbReference type="FunFam" id="3.30.230.70:FF:000002">
    <property type="entry name" value="Polyribonucleotide nucleotidyltransferase"/>
    <property type="match status" value="1"/>
</dbReference>
<dbReference type="Gene3D" id="3.30.230.70">
    <property type="entry name" value="GHMP Kinase, N-terminal domain"/>
    <property type="match status" value="2"/>
</dbReference>
<dbReference type="Gene3D" id="3.30.1370.10">
    <property type="entry name" value="K Homology domain, type 1"/>
    <property type="match status" value="1"/>
</dbReference>
<dbReference type="Gene3D" id="2.40.50.140">
    <property type="entry name" value="Nucleic acid-binding proteins"/>
    <property type="match status" value="1"/>
</dbReference>
<dbReference type="HAMAP" id="MF_01595">
    <property type="entry name" value="PNPase"/>
    <property type="match status" value="1"/>
</dbReference>
<dbReference type="InterPro" id="IPR001247">
    <property type="entry name" value="ExoRNase_PH_dom1"/>
</dbReference>
<dbReference type="InterPro" id="IPR015847">
    <property type="entry name" value="ExoRNase_PH_dom2"/>
</dbReference>
<dbReference type="InterPro" id="IPR036345">
    <property type="entry name" value="ExoRNase_PH_dom2_sf"/>
</dbReference>
<dbReference type="InterPro" id="IPR004087">
    <property type="entry name" value="KH_dom"/>
</dbReference>
<dbReference type="InterPro" id="IPR004088">
    <property type="entry name" value="KH_dom_type_1"/>
</dbReference>
<dbReference type="InterPro" id="IPR036612">
    <property type="entry name" value="KH_dom_type_1_sf"/>
</dbReference>
<dbReference type="InterPro" id="IPR012340">
    <property type="entry name" value="NA-bd_OB-fold"/>
</dbReference>
<dbReference type="InterPro" id="IPR012162">
    <property type="entry name" value="PNPase"/>
</dbReference>
<dbReference type="InterPro" id="IPR027408">
    <property type="entry name" value="PNPase/RNase_PH_dom_sf"/>
</dbReference>
<dbReference type="InterPro" id="IPR015848">
    <property type="entry name" value="PNPase_PH_RNA-bd_bac/org-type"/>
</dbReference>
<dbReference type="InterPro" id="IPR036456">
    <property type="entry name" value="PNPase_PH_RNA-bd_sf"/>
</dbReference>
<dbReference type="InterPro" id="IPR020568">
    <property type="entry name" value="Ribosomal_Su5_D2-typ_SF"/>
</dbReference>
<dbReference type="InterPro" id="IPR003029">
    <property type="entry name" value="S1_domain"/>
</dbReference>
<dbReference type="NCBIfam" id="TIGR03591">
    <property type="entry name" value="polynuc_phos"/>
    <property type="match status" value="1"/>
</dbReference>
<dbReference type="NCBIfam" id="NF008805">
    <property type="entry name" value="PRK11824.1"/>
    <property type="match status" value="1"/>
</dbReference>
<dbReference type="PANTHER" id="PTHR11252">
    <property type="entry name" value="POLYRIBONUCLEOTIDE NUCLEOTIDYLTRANSFERASE"/>
    <property type="match status" value="1"/>
</dbReference>
<dbReference type="PANTHER" id="PTHR11252:SF0">
    <property type="entry name" value="POLYRIBONUCLEOTIDE NUCLEOTIDYLTRANSFERASE 1, MITOCHONDRIAL"/>
    <property type="match status" value="1"/>
</dbReference>
<dbReference type="Pfam" id="PF00013">
    <property type="entry name" value="KH_1"/>
    <property type="match status" value="1"/>
</dbReference>
<dbReference type="Pfam" id="PF03726">
    <property type="entry name" value="PNPase"/>
    <property type="match status" value="1"/>
</dbReference>
<dbReference type="Pfam" id="PF01138">
    <property type="entry name" value="RNase_PH"/>
    <property type="match status" value="2"/>
</dbReference>
<dbReference type="Pfam" id="PF03725">
    <property type="entry name" value="RNase_PH_C"/>
    <property type="match status" value="2"/>
</dbReference>
<dbReference type="Pfam" id="PF00575">
    <property type="entry name" value="S1"/>
    <property type="match status" value="1"/>
</dbReference>
<dbReference type="PIRSF" id="PIRSF005499">
    <property type="entry name" value="PNPase"/>
    <property type="match status" value="1"/>
</dbReference>
<dbReference type="SMART" id="SM00322">
    <property type="entry name" value="KH"/>
    <property type="match status" value="1"/>
</dbReference>
<dbReference type="SMART" id="SM00316">
    <property type="entry name" value="S1"/>
    <property type="match status" value="1"/>
</dbReference>
<dbReference type="SUPFAM" id="SSF54791">
    <property type="entry name" value="Eukaryotic type KH-domain (KH-domain type I)"/>
    <property type="match status" value="1"/>
</dbReference>
<dbReference type="SUPFAM" id="SSF50249">
    <property type="entry name" value="Nucleic acid-binding proteins"/>
    <property type="match status" value="1"/>
</dbReference>
<dbReference type="SUPFAM" id="SSF46915">
    <property type="entry name" value="Polynucleotide phosphorylase/guanosine pentaphosphate synthase (PNPase/GPSI), domain 3"/>
    <property type="match status" value="1"/>
</dbReference>
<dbReference type="SUPFAM" id="SSF55666">
    <property type="entry name" value="Ribonuclease PH domain 2-like"/>
    <property type="match status" value="2"/>
</dbReference>
<dbReference type="SUPFAM" id="SSF54211">
    <property type="entry name" value="Ribosomal protein S5 domain 2-like"/>
    <property type="match status" value="2"/>
</dbReference>
<dbReference type="PROSITE" id="PS50084">
    <property type="entry name" value="KH_TYPE_1"/>
    <property type="match status" value="1"/>
</dbReference>
<dbReference type="PROSITE" id="PS50126">
    <property type="entry name" value="S1"/>
    <property type="match status" value="1"/>
</dbReference>
<reference key="1">
    <citation type="journal article" date="2005" name="Nat. Biotechnol.">
        <title>The genome sequence of the ethanologenic bacterium Zymomonas mobilis ZM4.</title>
        <authorList>
            <person name="Seo J.-S."/>
            <person name="Chong H."/>
            <person name="Park H.S."/>
            <person name="Yoon K.-O."/>
            <person name="Jung C."/>
            <person name="Kim J.J."/>
            <person name="Hong J.H."/>
            <person name="Kim H."/>
            <person name="Kim J.-H."/>
            <person name="Kil J.-I."/>
            <person name="Park C.J."/>
            <person name="Oh H.-M."/>
            <person name="Lee J.-S."/>
            <person name="Jin S.-J."/>
            <person name="Um H.-W."/>
            <person name="Lee H.-J."/>
            <person name="Oh S.-J."/>
            <person name="Kim J.Y."/>
            <person name="Kang H.L."/>
            <person name="Lee S.Y."/>
            <person name="Lee K.J."/>
            <person name="Kang H.S."/>
        </authorList>
    </citation>
    <scope>NUCLEOTIDE SEQUENCE [LARGE SCALE GENOMIC DNA]</scope>
    <source>
        <strain>ATCC 31821 / ZM4 / CP4</strain>
    </source>
</reference>
<evidence type="ECO:0000255" key="1">
    <source>
        <dbReference type="HAMAP-Rule" id="MF_01595"/>
    </source>
</evidence>
<evidence type="ECO:0000256" key="2">
    <source>
        <dbReference type="SAM" id="MobiDB-lite"/>
    </source>
</evidence>
<proteinExistence type="inferred from homology"/>
<feature type="chain" id="PRO_0000329953" description="Polyribonucleotide nucleotidyltransferase">
    <location>
        <begin position="1"/>
        <end position="748"/>
    </location>
</feature>
<feature type="domain" description="KH" evidence="1">
    <location>
        <begin position="551"/>
        <end position="610"/>
    </location>
</feature>
<feature type="domain" description="S1 motif" evidence="1">
    <location>
        <begin position="620"/>
        <end position="688"/>
    </location>
</feature>
<feature type="region of interest" description="Disordered" evidence="2">
    <location>
        <begin position="693"/>
        <end position="748"/>
    </location>
</feature>
<feature type="compositionally biased region" description="Basic and acidic residues" evidence="2">
    <location>
        <begin position="699"/>
        <end position="736"/>
    </location>
</feature>
<feature type="binding site" evidence="1">
    <location>
        <position position="484"/>
    </location>
    <ligand>
        <name>Mg(2+)</name>
        <dbReference type="ChEBI" id="CHEBI:18420"/>
    </ligand>
</feature>
<feature type="binding site" evidence="1">
    <location>
        <position position="490"/>
    </location>
    <ligand>
        <name>Mg(2+)</name>
        <dbReference type="ChEBI" id="CHEBI:18420"/>
    </ligand>
</feature>